<gene>
    <name evidence="1" type="primary">clcA</name>
    <name evidence="1" type="synonym">eriC</name>
    <name type="ordered locus">SSPA0202</name>
</gene>
<organism>
    <name type="scientific">Salmonella paratyphi A (strain AKU_12601)</name>
    <dbReference type="NCBI Taxonomy" id="554290"/>
    <lineage>
        <taxon>Bacteria</taxon>
        <taxon>Pseudomonadati</taxon>
        <taxon>Pseudomonadota</taxon>
        <taxon>Gammaproteobacteria</taxon>
        <taxon>Enterobacterales</taxon>
        <taxon>Enterobacteriaceae</taxon>
        <taxon>Salmonella</taxon>
    </lineage>
</organism>
<feature type="chain" id="PRO_1000137309" description="H(+)/Cl(-) exchange transporter ClcA">
    <location>
        <begin position="1"/>
        <end position="473"/>
    </location>
</feature>
<feature type="topological domain" description="Cytoplasmic" evidence="1">
    <location>
        <begin position="1"/>
        <end position="32"/>
    </location>
</feature>
<feature type="transmembrane region" description="Helical" evidence="1">
    <location>
        <begin position="33"/>
        <end position="69"/>
    </location>
</feature>
<feature type="topological domain" description="Periplasmic" evidence="1">
    <location>
        <begin position="70"/>
        <end position="76"/>
    </location>
</feature>
<feature type="transmembrane region" description="Helical" evidence="1">
    <location>
        <begin position="77"/>
        <end position="100"/>
    </location>
</feature>
<feature type="intramembrane region" description="Helical" evidence="1">
    <location>
        <begin position="109"/>
        <end position="116"/>
    </location>
</feature>
<feature type="topological domain" description="Cytoplasmic" evidence="1">
    <location>
        <begin position="117"/>
        <end position="123"/>
    </location>
</feature>
<feature type="transmembrane region" description="Helical" evidence="1">
    <location>
        <begin position="124"/>
        <end position="141"/>
    </location>
</feature>
<feature type="transmembrane region" description="Helical" evidence="1">
    <location>
        <begin position="148"/>
        <end position="166"/>
    </location>
</feature>
<feature type="topological domain" description="Cytoplasmic" evidence="1">
    <location>
        <begin position="167"/>
        <end position="176"/>
    </location>
</feature>
<feature type="intramembrane region" description="Helical" evidence="1">
    <location>
        <begin position="177"/>
        <end position="189"/>
    </location>
</feature>
<feature type="intramembrane region" description="Helical" evidence="1">
    <location>
        <begin position="193"/>
        <end position="201"/>
    </location>
</feature>
<feature type="topological domain" description="Cytoplasmic" evidence="1">
    <location>
        <begin position="202"/>
        <end position="214"/>
    </location>
</feature>
<feature type="transmembrane region" description="Helical" evidence="1">
    <location>
        <begin position="215"/>
        <end position="232"/>
    </location>
</feature>
<feature type="topological domain" description="Periplasmic" evidence="1">
    <location>
        <begin position="233"/>
        <end position="252"/>
    </location>
</feature>
<feature type="transmembrane region" description="Helical" evidence="1">
    <location>
        <begin position="253"/>
        <end position="281"/>
    </location>
</feature>
<feature type="topological domain" description="Cytoplasmic" evidence="1">
    <location>
        <begin position="282"/>
        <end position="287"/>
    </location>
</feature>
<feature type="transmembrane region" description="Helical" evidence="1">
    <location>
        <begin position="288"/>
        <end position="309"/>
    </location>
</feature>
<feature type="topological domain" description="Periplasmic" evidence="1">
    <location>
        <begin position="310"/>
        <end position="329"/>
    </location>
</feature>
<feature type="transmembrane region" description="Helical" evidence="1">
    <location>
        <begin position="330"/>
        <end position="349"/>
    </location>
</feature>
<feature type="transmembrane region" description="Helical" evidence="1">
    <location>
        <begin position="355"/>
        <end position="376"/>
    </location>
</feature>
<feature type="topological domain" description="Periplasmic" evidence="1">
    <location>
        <begin position="377"/>
        <end position="386"/>
    </location>
</feature>
<feature type="intramembrane region" description="Helical" evidence="1">
    <location>
        <begin position="387"/>
        <end position="401"/>
    </location>
</feature>
<feature type="intramembrane region" description="Note=Loop between two helices" evidence="1">
    <location>
        <begin position="402"/>
        <end position="404"/>
    </location>
</feature>
<feature type="intramembrane region" description="Helical" evidence="1">
    <location>
        <begin position="405"/>
        <end position="416"/>
    </location>
</feature>
<feature type="intramembrane region" description="Note=Loop between two helices" evidence="1">
    <location>
        <begin position="417"/>
        <end position="421"/>
    </location>
</feature>
<feature type="transmembrane region" description="Helical" evidence="1">
    <location>
        <begin position="422"/>
        <end position="438"/>
    </location>
</feature>
<feature type="topological domain" description="Cytoplasmic" evidence="1">
    <location>
        <begin position="439"/>
        <end position="473"/>
    </location>
</feature>
<feature type="short sequence motif" description="Selectivity filter part_1" evidence="1">
    <location>
        <begin position="106"/>
        <end position="110"/>
    </location>
</feature>
<feature type="short sequence motif" description="Selectivity filter part_2" evidence="1">
    <location>
        <begin position="146"/>
        <end position="150"/>
    </location>
</feature>
<feature type="short sequence motif" description="Selectivity filter part_3" evidence="1">
    <location>
        <begin position="355"/>
        <end position="359"/>
    </location>
</feature>
<feature type="binding site" evidence="1">
    <location>
        <position position="107"/>
    </location>
    <ligand>
        <name>chloride</name>
        <dbReference type="ChEBI" id="CHEBI:17996"/>
    </ligand>
</feature>
<feature type="binding site" evidence="1">
    <location>
        <position position="356"/>
    </location>
    <ligand>
        <name>chloride</name>
        <dbReference type="ChEBI" id="CHEBI:17996"/>
    </ligand>
</feature>
<feature type="binding site" evidence="1">
    <location>
        <position position="357"/>
    </location>
    <ligand>
        <name>chloride</name>
        <dbReference type="ChEBI" id="CHEBI:17996"/>
    </ligand>
</feature>
<feature type="binding site" evidence="1">
    <location>
        <position position="445"/>
    </location>
    <ligand>
        <name>chloride</name>
        <dbReference type="ChEBI" id="CHEBI:17996"/>
    </ligand>
</feature>
<feature type="site" description="Mediates proton transfer from the outer aqueous phase to the interior of the protein; involved in linking H(+) and Cl(-) transport" evidence="1">
    <location>
        <position position="148"/>
    </location>
</feature>
<feature type="site" description="Mediates proton transfer from the protein to the inner aqueous phase" evidence="1">
    <location>
        <position position="203"/>
    </location>
</feature>
<dbReference type="EMBL" id="FM200053">
    <property type="protein sequence ID" value="CAR58316.1"/>
    <property type="molecule type" value="Genomic_DNA"/>
</dbReference>
<dbReference type="RefSeq" id="WP_000845434.1">
    <property type="nucleotide sequence ID" value="NC_011147.1"/>
</dbReference>
<dbReference type="SMR" id="B5BL83"/>
<dbReference type="KEGG" id="sek:SSPA0202"/>
<dbReference type="HOGENOM" id="CLU_015263_7_0_6"/>
<dbReference type="Proteomes" id="UP000001869">
    <property type="component" value="Chromosome"/>
</dbReference>
<dbReference type="GO" id="GO:0005886">
    <property type="term" value="C:plasma membrane"/>
    <property type="evidence" value="ECO:0007669"/>
    <property type="project" value="UniProtKB-SubCell"/>
</dbReference>
<dbReference type="GO" id="GO:0015297">
    <property type="term" value="F:antiporter activity"/>
    <property type="evidence" value="ECO:0007669"/>
    <property type="project" value="UniProtKB-UniRule"/>
</dbReference>
<dbReference type="GO" id="GO:0005247">
    <property type="term" value="F:voltage-gated chloride channel activity"/>
    <property type="evidence" value="ECO:0007669"/>
    <property type="project" value="TreeGrafter"/>
</dbReference>
<dbReference type="CDD" id="cd01031">
    <property type="entry name" value="EriC"/>
    <property type="match status" value="1"/>
</dbReference>
<dbReference type="FunFam" id="1.10.3080.10:FF:000005">
    <property type="entry name" value="H(+)/Cl(-) exchange transporter ClcA"/>
    <property type="match status" value="1"/>
</dbReference>
<dbReference type="Gene3D" id="1.10.3080.10">
    <property type="entry name" value="Clc chloride channel"/>
    <property type="match status" value="1"/>
</dbReference>
<dbReference type="HAMAP" id="MF_01128">
    <property type="entry name" value="CLC_ClcA"/>
    <property type="match status" value="1"/>
</dbReference>
<dbReference type="InterPro" id="IPR023861">
    <property type="entry name" value="Cl-channel_ClcA"/>
</dbReference>
<dbReference type="InterPro" id="IPR014743">
    <property type="entry name" value="Cl-channel_core"/>
</dbReference>
<dbReference type="InterPro" id="IPR001807">
    <property type="entry name" value="ClC"/>
</dbReference>
<dbReference type="NCBIfam" id="NF003640">
    <property type="entry name" value="PRK05277.1"/>
    <property type="match status" value="1"/>
</dbReference>
<dbReference type="PANTHER" id="PTHR45711">
    <property type="entry name" value="CHLORIDE CHANNEL PROTEIN"/>
    <property type="match status" value="1"/>
</dbReference>
<dbReference type="PANTHER" id="PTHR45711:SF6">
    <property type="entry name" value="CHLORIDE CHANNEL PROTEIN"/>
    <property type="match status" value="1"/>
</dbReference>
<dbReference type="Pfam" id="PF00654">
    <property type="entry name" value="Voltage_CLC"/>
    <property type="match status" value="1"/>
</dbReference>
<dbReference type="PRINTS" id="PR00762">
    <property type="entry name" value="CLCHANNEL"/>
</dbReference>
<dbReference type="SUPFAM" id="SSF81340">
    <property type="entry name" value="Clc chloride channel"/>
    <property type="match status" value="1"/>
</dbReference>
<reference key="1">
    <citation type="journal article" date="2009" name="BMC Genomics">
        <title>Pseudogene accumulation in the evolutionary histories of Salmonella enterica serovars Paratyphi A and Typhi.</title>
        <authorList>
            <person name="Holt K.E."/>
            <person name="Thomson N.R."/>
            <person name="Wain J."/>
            <person name="Langridge G.C."/>
            <person name="Hasan R."/>
            <person name="Bhutta Z.A."/>
            <person name="Quail M.A."/>
            <person name="Norbertczak H."/>
            <person name="Walker D."/>
            <person name="Simmonds M."/>
            <person name="White B."/>
            <person name="Bason N."/>
            <person name="Mungall K."/>
            <person name="Dougan G."/>
            <person name="Parkhill J."/>
        </authorList>
    </citation>
    <scope>NUCLEOTIDE SEQUENCE [LARGE SCALE GENOMIC DNA]</scope>
    <source>
        <strain>AKU_12601</strain>
    </source>
</reference>
<keyword id="KW-0050">Antiport</keyword>
<keyword id="KW-0997">Cell inner membrane</keyword>
<keyword id="KW-1003">Cell membrane</keyword>
<keyword id="KW-0868">Chloride</keyword>
<keyword id="KW-0406">Ion transport</keyword>
<keyword id="KW-0472">Membrane</keyword>
<keyword id="KW-0812">Transmembrane</keyword>
<keyword id="KW-1133">Transmembrane helix</keyword>
<keyword id="KW-0813">Transport</keyword>
<accession>B5BL83</accession>
<sequence length="473" mass="50379">MKTDTSTFLAQQIVRLRRRDQIRRLMQRDKTPLAILFMAAVVGTLTGLVGVAFEKTVSWVQNMRIGALVQVADHAFLLWPLAFILSALLAMVGYFLVRKFAPEAGGSGIPEIEGALEELRPVRWWRVLPVKFIGGMGTLGAGMVLGREGPTVQIGGNLGRMVLDVFRMRSAEARHTLLATGAAAGLSAAFNAPLAGILFIIEEMRPQFRYNLISIKAVFTGVIMSSIVFRIFNGEAPIIEVGKLSDAPVNTLWLYLILGIIFGCVGPVFNSLVLRTQDMFQRFHGGEIKKWVLMGGAIGGLCGILGLIEPAAAGGGFNLIPIAAAGNFSVGLLLFIFITRVVTTLLCFSSGAPGGIFAPMLALGTLLGTAFGMAAAVLFPQYHPEAGTFAIAGMGALMAASVRAPLTGIVLVLEMTDNYQLILPMIITCLGATLLAQFLGGKPLYSTILARTLAKQDAEQAAKNQNAPAGENT</sequence>
<proteinExistence type="inferred from homology"/>
<evidence type="ECO:0000255" key="1">
    <source>
        <dbReference type="HAMAP-Rule" id="MF_01128"/>
    </source>
</evidence>
<name>CLCA_SALPK</name>
<protein>
    <recommendedName>
        <fullName evidence="1">H(+)/Cl(-) exchange transporter ClcA</fullName>
    </recommendedName>
</protein>
<comment type="function">
    <text evidence="1">Proton-coupled chloride transporter. Functions as antiport system and exchanges two chloride ions for 1 proton. Probably acts as an electrical shunt for an outwardly-directed proton pump that is linked to amino acid decarboxylation, as part of the extreme acid resistance (XAR) response.</text>
</comment>
<comment type="catalytic activity">
    <reaction evidence="1">
        <text>2 chloride(in) + H(+)(out) = 2 chloride(out) + H(+)(in)</text>
        <dbReference type="Rhea" id="RHEA:29567"/>
        <dbReference type="ChEBI" id="CHEBI:15378"/>
        <dbReference type="ChEBI" id="CHEBI:17996"/>
    </reaction>
</comment>
<comment type="subunit">
    <text evidence="1">Homodimer.</text>
</comment>
<comment type="subcellular location">
    <subcellularLocation>
        <location evidence="1">Cell inner membrane</location>
        <topology evidence="1">Multi-pass membrane protein</topology>
    </subcellularLocation>
</comment>
<comment type="similarity">
    <text evidence="1">Belongs to the chloride channel (TC 2.A.49) family. ClcA subfamily.</text>
</comment>